<proteinExistence type="inferred from homology"/>
<geneLocation type="chloroplast"/>
<protein>
    <recommendedName>
        <fullName evidence="1">Large ribosomal subunit protein bL33c</fullName>
    </recommendedName>
    <alternativeName>
        <fullName evidence="2">50S ribosomal protein L33, chloroplastic</fullName>
    </alternativeName>
</protein>
<accession>Q1XDN2</accession>
<evidence type="ECO:0000255" key="1">
    <source>
        <dbReference type="HAMAP-Rule" id="MF_00294"/>
    </source>
</evidence>
<evidence type="ECO:0000305" key="2"/>
<reference key="1">
    <citation type="submission" date="2003-11" db="EMBL/GenBank/DDBJ databases">
        <title>Whole genome sequence of Porphyra yezoensis chloroplast.</title>
        <authorList>
            <person name="Kunimoto M."/>
            <person name="Morishima K."/>
            <person name="Yoshikawa M."/>
            <person name="Fukuda S."/>
            <person name="Kobayashi T."/>
            <person name="Kobayashi M."/>
            <person name="Okazaki T."/>
            <person name="Ohara I."/>
            <person name="Nakayama I."/>
        </authorList>
    </citation>
    <scope>NUCLEOTIDE SEQUENCE [LARGE SCALE GENOMIC DNA]</scope>
    <source>
        <strain>U-51</strain>
    </source>
</reference>
<gene>
    <name evidence="1" type="primary">rpl33</name>
</gene>
<feature type="chain" id="PRO_0000276524" description="Large ribosomal subunit protein bL33c">
    <location>
        <begin position="1"/>
        <end position="65"/>
    </location>
</feature>
<name>RK33_PYRYE</name>
<organism>
    <name type="scientific">Pyropia yezoensis</name>
    <name type="common">Susabi-nori</name>
    <name type="synonym">Porphyra yezoensis</name>
    <dbReference type="NCBI Taxonomy" id="2788"/>
    <lineage>
        <taxon>Eukaryota</taxon>
        <taxon>Rhodophyta</taxon>
        <taxon>Bangiophyceae</taxon>
        <taxon>Bangiales</taxon>
        <taxon>Bangiaceae</taxon>
        <taxon>Pyropia</taxon>
    </lineage>
</organism>
<sequence>MAKSKGARIVITLECSDKAGEFAQKRKPGVFRYTTTKNRRNTPSRIELNKFCPNCNQHCIFKEIK</sequence>
<comment type="subcellular location">
    <subcellularLocation>
        <location>Plastid</location>
        <location>Chloroplast</location>
    </subcellularLocation>
</comment>
<comment type="similarity">
    <text evidence="1">Belongs to the bacterial ribosomal protein bL33 family.</text>
</comment>
<dbReference type="EMBL" id="AP006715">
    <property type="protein sequence ID" value="BAE92379.1"/>
    <property type="molecule type" value="Genomic_DNA"/>
</dbReference>
<dbReference type="RefSeq" id="YP_536936.1">
    <property type="nucleotide sequence ID" value="NC_007932.1"/>
</dbReference>
<dbReference type="SMR" id="Q1XDN2"/>
<dbReference type="GeneID" id="3978921"/>
<dbReference type="GO" id="GO:0009507">
    <property type="term" value="C:chloroplast"/>
    <property type="evidence" value="ECO:0007669"/>
    <property type="project" value="UniProtKB-SubCell"/>
</dbReference>
<dbReference type="GO" id="GO:1990904">
    <property type="term" value="C:ribonucleoprotein complex"/>
    <property type="evidence" value="ECO:0007669"/>
    <property type="project" value="UniProtKB-KW"/>
</dbReference>
<dbReference type="GO" id="GO:0005840">
    <property type="term" value="C:ribosome"/>
    <property type="evidence" value="ECO:0007669"/>
    <property type="project" value="UniProtKB-KW"/>
</dbReference>
<dbReference type="GO" id="GO:0003735">
    <property type="term" value="F:structural constituent of ribosome"/>
    <property type="evidence" value="ECO:0007669"/>
    <property type="project" value="InterPro"/>
</dbReference>
<dbReference type="GO" id="GO:0006412">
    <property type="term" value="P:translation"/>
    <property type="evidence" value="ECO:0007669"/>
    <property type="project" value="UniProtKB-UniRule"/>
</dbReference>
<dbReference type="Gene3D" id="2.20.28.120">
    <property type="entry name" value="Ribosomal protein L33"/>
    <property type="match status" value="1"/>
</dbReference>
<dbReference type="HAMAP" id="MF_00294">
    <property type="entry name" value="Ribosomal_bL33"/>
    <property type="match status" value="1"/>
</dbReference>
<dbReference type="InterPro" id="IPR001705">
    <property type="entry name" value="Ribosomal_bL33"/>
</dbReference>
<dbReference type="InterPro" id="IPR018264">
    <property type="entry name" value="Ribosomal_bL33_CS"/>
</dbReference>
<dbReference type="InterPro" id="IPR038584">
    <property type="entry name" value="Ribosomal_bL33_sf"/>
</dbReference>
<dbReference type="InterPro" id="IPR011332">
    <property type="entry name" value="Ribosomal_zn-bd"/>
</dbReference>
<dbReference type="NCBIfam" id="NF001764">
    <property type="entry name" value="PRK00504.1"/>
    <property type="match status" value="1"/>
</dbReference>
<dbReference type="NCBIfam" id="NF001860">
    <property type="entry name" value="PRK00595.1"/>
    <property type="match status" value="1"/>
</dbReference>
<dbReference type="NCBIfam" id="TIGR01023">
    <property type="entry name" value="rpmG_bact"/>
    <property type="match status" value="1"/>
</dbReference>
<dbReference type="PANTHER" id="PTHR43168">
    <property type="entry name" value="50S RIBOSOMAL PROTEIN L33, CHLOROPLASTIC"/>
    <property type="match status" value="1"/>
</dbReference>
<dbReference type="PANTHER" id="PTHR43168:SF2">
    <property type="entry name" value="LARGE RIBOSOMAL SUBUNIT PROTEIN BL33C"/>
    <property type="match status" value="1"/>
</dbReference>
<dbReference type="Pfam" id="PF00471">
    <property type="entry name" value="Ribosomal_L33"/>
    <property type="match status" value="1"/>
</dbReference>
<dbReference type="SUPFAM" id="SSF57829">
    <property type="entry name" value="Zn-binding ribosomal proteins"/>
    <property type="match status" value="1"/>
</dbReference>
<dbReference type="PROSITE" id="PS00582">
    <property type="entry name" value="RIBOSOMAL_L33"/>
    <property type="match status" value="1"/>
</dbReference>
<keyword id="KW-0150">Chloroplast</keyword>
<keyword id="KW-0934">Plastid</keyword>
<keyword id="KW-0687">Ribonucleoprotein</keyword>
<keyword id="KW-0689">Ribosomal protein</keyword>